<name>NDST_CAEBR</name>
<dbReference type="EC" id="2.8.2.8"/>
<dbReference type="EC" id="3.-.-.-"/>
<dbReference type="EC" id="2.8.2.-"/>
<dbReference type="EMBL" id="HE600903">
    <property type="protein sequence ID" value="CAP36860.2"/>
    <property type="molecule type" value="Genomic_DNA"/>
</dbReference>
<dbReference type="SMR" id="Q60V90"/>
<dbReference type="FunCoup" id="Q60V90">
    <property type="interactions" value="2132"/>
</dbReference>
<dbReference type="STRING" id="6238.Q60V90"/>
<dbReference type="GlyCosmos" id="Q60V90">
    <property type="glycosylation" value="9 sites, No reported glycans"/>
</dbReference>
<dbReference type="WormBase" id="CBG19653">
    <property type="protein sequence ID" value="CBP46453"/>
    <property type="gene ID" value="WBGene00038831"/>
    <property type="gene designation" value="Cbr-hst-1"/>
</dbReference>
<dbReference type="eggNOG" id="KOG3703">
    <property type="taxonomic scope" value="Eukaryota"/>
</dbReference>
<dbReference type="HOGENOM" id="CLU_011357_2_0_1"/>
<dbReference type="InParanoid" id="Q60V90"/>
<dbReference type="OMA" id="GLKFWLH"/>
<dbReference type="UniPathway" id="UPA00756"/>
<dbReference type="UniPathway" id="UPA00862"/>
<dbReference type="Proteomes" id="UP000008549">
    <property type="component" value="Unassembled WGS sequence"/>
</dbReference>
<dbReference type="GO" id="GO:0005794">
    <property type="term" value="C:Golgi apparatus"/>
    <property type="evidence" value="ECO:0000318"/>
    <property type="project" value="GO_Central"/>
</dbReference>
<dbReference type="GO" id="GO:0000139">
    <property type="term" value="C:Golgi membrane"/>
    <property type="evidence" value="ECO:0007669"/>
    <property type="project" value="UniProtKB-SubCell"/>
</dbReference>
<dbReference type="GO" id="GO:0019213">
    <property type="term" value="F:deacetylase activity"/>
    <property type="evidence" value="ECO:0000318"/>
    <property type="project" value="GO_Central"/>
</dbReference>
<dbReference type="GO" id="GO:0015016">
    <property type="term" value="F:heparan sulfate N-sulfotransferase activity"/>
    <property type="evidence" value="ECO:0000318"/>
    <property type="project" value="GO_Central"/>
</dbReference>
<dbReference type="GO" id="GO:0016787">
    <property type="term" value="F:hydrolase activity"/>
    <property type="evidence" value="ECO:0007669"/>
    <property type="project" value="UniProtKB-KW"/>
</dbReference>
<dbReference type="GO" id="GO:0015012">
    <property type="term" value="P:heparan sulfate proteoglycan biosynthetic process"/>
    <property type="evidence" value="ECO:0007669"/>
    <property type="project" value="UniProtKB-UniPathway"/>
</dbReference>
<dbReference type="GO" id="GO:0030210">
    <property type="term" value="P:heparin proteoglycan biosynthetic process"/>
    <property type="evidence" value="ECO:0007669"/>
    <property type="project" value="UniProtKB-UniPathway"/>
</dbReference>
<dbReference type="FunFam" id="3.40.50.300:FF:004950">
    <property type="entry name" value="Bifunctional heparan sulfate N-deacetylase/N-sulfotransferase 1"/>
    <property type="match status" value="1"/>
</dbReference>
<dbReference type="Gene3D" id="3.40.50.300">
    <property type="entry name" value="P-loop containing nucleotide triphosphate hydrolases"/>
    <property type="match status" value="1"/>
</dbReference>
<dbReference type="InterPro" id="IPR021930">
    <property type="entry name" value="Heparan_SO4_deacetylase_dom"/>
</dbReference>
<dbReference type="InterPro" id="IPR056793">
    <property type="entry name" value="HSNSD_N"/>
</dbReference>
<dbReference type="InterPro" id="IPR037359">
    <property type="entry name" value="NST/OST"/>
</dbReference>
<dbReference type="InterPro" id="IPR027417">
    <property type="entry name" value="P-loop_NTPase"/>
</dbReference>
<dbReference type="InterPro" id="IPR000863">
    <property type="entry name" value="Sulfotransferase_dom"/>
</dbReference>
<dbReference type="PANTHER" id="PTHR10605:SF56">
    <property type="entry name" value="BIFUNCTIONAL HEPARAN SULFATE N-DEACETYLASE_N-SULFOTRANSFERASE"/>
    <property type="match status" value="1"/>
</dbReference>
<dbReference type="PANTHER" id="PTHR10605">
    <property type="entry name" value="HEPARAN SULFATE SULFOTRANSFERASE"/>
    <property type="match status" value="1"/>
</dbReference>
<dbReference type="Pfam" id="PF12062">
    <property type="entry name" value="HSNSD-CE"/>
    <property type="match status" value="1"/>
</dbReference>
<dbReference type="Pfam" id="PF25119">
    <property type="entry name" value="HSNSD_N"/>
    <property type="match status" value="1"/>
</dbReference>
<dbReference type="Pfam" id="PF00685">
    <property type="entry name" value="Sulfotransfer_1"/>
    <property type="match status" value="1"/>
</dbReference>
<dbReference type="SUPFAM" id="SSF52540">
    <property type="entry name" value="P-loop containing nucleoside triphosphate hydrolases"/>
    <property type="match status" value="1"/>
</dbReference>
<accession>Q60V90</accession>
<accession>A8XW41</accession>
<feature type="chain" id="PRO_0000225663" description="Bifunctional heparan sulfate N-deacetylase/N-sulfotransferase 1">
    <location>
        <begin position="1"/>
        <end position="859"/>
    </location>
</feature>
<feature type="topological domain" description="Cytoplasmic" evidence="2">
    <location>
        <begin position="1"/>
        <end position="13"/>
    </location>
</feature>
<feature type="transmembrane region" description="Helical; Signal-anchor for type II membrane protein" evidence="2">
    <location>
        <begin position="14"/>
        <end position="34"/>
    </location>
</feature>
<feature type="topological domain" description="Lumenal" evidence="2">
    <location>
        <begin position="35"/>
        <end position="859"/>
    </location>
</feature>
<feature type="region of interest" description="Heparan sulfate N-deacetylase 1">
    <location>
        <begin position="34"/>
        <end position="575"/>
    </location>
</feature>
<feature type="region of interest" description="Heparan sulfate N-sulfotransferase 1">
    <location>
        <begin position="576"/>
        <end position="859"/>
    </location>
</feature>
<feature type="active site" description="For sulfotransferase activity" evidence="1">
    <location>
        <position position="593"/>
    </location>
</feature>
<feature type="binding site" evidence="1">
    <location>
        <begin position="593"/>
        <end position="597"/>
    </location>
    <ligand>
        <name>3'-phosphoadenylyl sulfate</name>
        <dbReference type="ChEBI" id="CHEBI:58339"/>
    </ligand>
</feature>
<feature type="binding site" evidence="1">
    <location>
        <position position="687"/>
    </location>
    <ligand>
        <name>3'-phosphoadenylyl sulfate</name>
        <dbReference type="ChEBI" id="CHEBI:58339"/>
    </ligand>
</feature>
<feature type="binding site" evidence="1">
    <location>
        <begin position="810"/>
        <end position="814"/>
    </location>
    <ligand>
        <name>3'-phosphoadenylyl sulfate</name>
        <dbReference type="ChEBI" id="CHEBI:58339"/>
    </ligand>
</feature>
<feature type="glycosylation site" description="N-linked (GlcNAc...) asparagine" evidence="2">
    <location>
        <position position="50"/>
    </location>
</feature>
<feature type="glycosylation site" description="N-linked (GlcNAc...) asparagine" evidence="2">
    <location>
        <position position="74"/>
    </location>
</feature>
<feature type="glycosylation site" description="N-linked (GlcNAc...) asparagine" evidence="2">
    <location>
        <position position="210"/>
    </location>
</feature>
<feature type="glycosylation site" description="N-linked (GlcNAc...) asparagine" evidence="2">
    <location>
        <position position="262"/>
    </location>
</feature>
<feature type="glycosylation site" description="N-linked (GlcNAc...) asparagine" evidence="2">
    <location>
        <position position="378"/>
    </location>
</feature>
<feature type="glycosylation site" description="N-linked (GlcNAc...) asparagine" evidence="2">
    <location>
        <position position="429"/>
    </location>
</feature>
<feature type="glycosylation site" description="N-linked (GlcNAc...) asparagine" evidence="2">
    <location>
        <position position="608"/>
    </location>
</feature>
<feature type="glycosylation site" description="N-linked (GlcNAc...) asparagine" evidence="2">
    <location>
        <position position="643"/>
    </location>
</feature>
<feature type="glycosylation site" description="N-linked (GlcNAc...) asparagine" evidence="2">
    <location>
        <position position="715"/>
    </location>
</feature>
<feature type="disulfide bond" evidence="1">
    <location>
        <begin position="796"/>
        <end position="805"/>
    </location>
</feature>
<gene>
    <name type="primary">hst-1</name>
    <name type="ORF">CBG19653</name>
</gene>
<proteinExistence type="inferred from homology"/>
<comment type="function">
    <text evidence="1">Essential bifunctional enzyme that catalyzes both the N-deacetylation and the N-sulfation of glucosamine (GlcNAc) of the glycosaminoglycan in heparan sulfate. Modifies the GlcNAc-GlcA disaccharide repeating sugar backbone to make N-sulfated heparosan, a prerequisite substrate for later modifications in heparin biosynthesis (By similarity).</text>
</comment>
<comment type="catalytic activity">
    <reaction>
        <text>alpha-D-glucosaminyl-[heparan sulfate](n) + 3'-phosphoadenylyl sulfate = N-sulfo-alpha-D-glucosaminyl-[heparan sulfate](n) + adenosine 3',5'-bisphosphate + 2 H(+)</text>
        <dbReference type="Rhea" id="RHEA:21980"/>
        <dbReference type="Rhea" id="RHEA-COMP:9830"/>
        <dbReference type="Rhea" id="RHEA-COMP:14602"/>
        <dbReference type="ChEBI" id="CHEBI:15378"/>
        <dbReference type="ChEBI" id="CHEBI:58339"/>
        <dbReference type="ChEBI" id="CHEBI:58343"/>
        <dbReference type="ChEBI" id="CHEBI:58388"/>
        <dbReference type="ChEBI" id="CHEBI:140572"/>
        <dbReference type="EC" id="2.8.2.8"/>
    </reaction>
</comment>
<comment type="pathway">
    <text>Glycan metabolism; heparan sulfate biosynthesis.</text>
</comment>
<comment type="pathway">
    <text>Glycan metabolism; heparin biosynthesis.</text>
</comment>
<comment type="subunit">
    <text evidence="1">Monomer.</text>
</comment>
<comment type="subcellular location">
    <subcellularLocation>
        <location evidence="1">Golgi apparatus membrane</location>
        <topology evidence="1">Single-pass type II membrane protein</topology>
    </subcellularLocation>
</comment>
<comment type="similarity">
    <text evidence="3">Belongs to the sulfotransferase 1 family. NDST subfamily.</text>
</comment>
<reference key="1">
    <citation type="journal article" date="2003" name="PLoS Biol.">
        <title>The genome sequence of Caenorhabditis briggsae: a platform for comparative genomics.</title>
        <authorList>
            <person name="Stein L.D."/>
            <person name="Bao Z."/>
            <person name="Blasiar D."/>
            <person name="Blumenthal T."/>
            <person name="Brent M.R."/>
            <person name="Chen N."/>
            <person name="Chinwalla A."/>
            <person name="Clarke L."/>
            <person name="Clee C."/>
            <person name="Coghlan A."/>
            <person name="Coulson A."/>
            <person name="D'Eustachio P."/>
            <person name="Fitch D.H.A."/>
            <person name="Fulton L.A."/>
            <person name="Fulton R.E."/>
            <person name="Griffiths-Jones S."/>
            <person name="Harris T.W."/>
            <person name="Hillier L.W."/>
            <person name="Kamath R."/>
            <person name="Kuwabara P.E."/>
            <person name="Mardis E.R."/>
            <person name="Marra M.A."/>
            <person name="Miner T.L."/>
            <person name="Minx P."/>
            <person name="Mullikin J.C."/>
            <person name="Plumb R.W."/>
            <person name="Rogers J."/>
            <person name="Schein J.E."/>
            <person name="Sohrmann M."/>
            <person name="Spieth J."/>
            <person name="Stajich J.E."/>
            <person name="Wei C."/>
            <person name="Willey D."/>
            <person name="Wilson R.K."/>
            <person name="Durbin R.M."/>
            <person name="Waterston R.H."/>
        </authorList>
    </citation>
    <scope>NUCLEOTIDE SEQUENCE [LARGE SCALE GENOMIC DNA]</scope>
    <source>
        <strain>AF16</strain>
    </source>
</reference>
<evidence type="ECO:0000250" key="1"/>
<evidence type="ECO:0000255" key="2"/>
<evidence type="ECO:0000305" key="3"/>
<organism>
    <name type="scientific">Caenorhabditis briggsae</name>
    <dbReference type="NCBI Taxonomy" id="6238"/>
    <lineage>
        <taxon>Eukaryota</taxon>
        <taxon>Metazoa</taxon>
        <taxon>Ecdysozoa</taxon>
        <taxon>Nematoda</taxon>
        <taxon>Chromadorea</taxon>
        <taxon>Rhabditida</taxon>
        <taxon>Rhabditina</taxon>
        <taxon>Rhabditomorpha</taxon>
        <taxon>Rhabditoidea</taxon>
        <taxon>Rhabditidae</taxon>
        <taxon>Peloderinae</taxon>
        <taxon>Caenorhabditis</taxon>
    </lineage>
</organism>
<keyword id="KW-1015">Disulfide bond</keyword>
<keyword id="KW-0325">Glycoprotein</keyword>
<keyword id="KW-0333">Golgi apparatus</keyword>
<keyword id="KW-0378">Hydrolase</keyword>
<keyword id="KW-0472">Membrane</keyword>
<keyword id="KW-0511">Multifunctional enzyme</keyword>
<keyword id="KW-1185">Reference proteome</keyword>
<keyword id="KW-0735">Signal-anchor</keyword>
<keyword id="KW-0808">Transferase</keyword>
<keyword id="KW-0812">Transmembrane</keyword>
<keyword id="KW-1133">Transmembrane helix</keyword>
<sequence>MIITPYLNPRLVKPLKWLAIIILLYFLYFSLFSINKKPGKPRKPPKAVENYTCPFEKADFSNFKDKKLEFHKNNGTDPKILVILDSLFSRHGKSIIQILNSQKFAFKAEAISKNLPVLTSAKRGKYSLIIVENYYKYLNMARWNRQLLDKYCKEYRVPLFSFIASKPNDQLKRIRIKGSSLWMWQNQRINRLTVSPSPIHKISKIGAYRNLTTQESDWILFEISENFESILTGTVKNGYERAVVLRDLGREDGVEKVIFGRNLTDFQIKITFLDALWWAMGDEKLFGLDRFVQVDIDDVFVGAQSTRIVEEDVRHLISAQNHFRNFIENFKFLLGFSGSYFRNGDDFEDRGDEILIENAEKFVWFPHMWRHNHAHEHNFTYLESIMVQNRLFAQNMHLPIDYPYAIAPQHDGVFPVHEQMYEAWKKIWNVTVTATEEYPHLKPATGRKGFIHSGIHVLPRQTCGLYTHTQFFDEYPEGFQKVIKSIQGGDLFFTILLNPISIFMTHQQNYAHDRLALYTFENLFRFLNCWTNIRLKWQSPVESAKMYFEKFPEERIPLWTNPCSDPRHQAILPPSMSCSKKSLPDLLIIGPQKTGSTALASFLALHPNVSQNMEIPGSFEEIQFFSGQNYLKGVEWYMSKFPNETTVIFEKSATYFDNPSAARQAAAMVPHAKLVIILQNPTQRAYSWFQSLFQHLIAHKDPIAMSSESLDVILNSTSSESAKFKIRQRCLSGGRYVHHLDKWLEHFSLQQIQFIDSDELRKEPAKVLSSLSKWLDLPEFPFETHIRFSPSKGFHCRLINGKTECLGESKGRKYSEMSQELRQKLDGIFALDNSALFKFLRKNRLKIPDWLEEAVRIRV</sequence>
<protein>
    <recommendedName>
        <fullName>Bifunctional heparan sulfate N-deacetylase/N-sulfotransferase 1</fullName>
        <ecNumber>2.8.2.8</ecNumber>
    </recommendedName>
    <alternativeName>
        <fullName>Glucosaminyl N-deacetylase/N-sulfotransferase 1</fullName>
    </alternativeName>
    <domain>
        <recommendedName>
            <fullName>Heparan sulfate N-deacetylase 1</fullName>
            <ecNumber>3.-.-.-</ecNumber>
        </recommendedName>
    </domain>
    <domain>
        <recommendedName>
            <fullName>Heparan sulfate N-sulfotransferase 1</fullName>
            <ecNumber>2.8.2.-</ecNumber>
        </recommendedName>
    </domain>
</protein>